<accession>Q09GK0</accession>
<dbReference type="EMBL" id="DQ912658">
    <property type="protein sequence ID" value="ABI74695.1"/>
    <property type="molecule type" value="mRNA"/>
</dbReference>
<dbReference type="SMR" id="Q09GK0"/>
<dbReference type="GO" id="GO:0005576">
    <property type="term" value="C:extracellular region"/>
    <property type="evidence" value="ECO:0007669"/>
    <property type="project" value="UniProtKB-SubCell"/>
</dbReference>
<dbReference type="GO" id="GO:0030246">
    <property type="term" value="F:carbohydrate binding"/>
    <property type="evidence" value="ECO:0007669"/>
    <property type="project" value="UniProtKB-KW"/>
</dbReference>
<dbReference type="GO" id="GO:0090729">
    <property type="term" value="F:toxin activity"/>
    <property type="evidence" value="ECO:0007669"/>
    <property type="project" value="UniProtKB-KW"/>
</dbReference>
<dbReference type="FunFam" id="3.10.100.10:FF:000087">
    <property type="entry name" value="Snaclec rhodocetin subunit delta"/>
    <property type="match status" value="1"/>
</dbReference>
<dbReference type="Gene3D" id="3.10.100.10">
    <property type="entry name" value="Mannose-Binding Protein A, subunit A"/>
    <property type="match status" value="1"/>
</dbReference>
<dbReference type="InterPro" id="IPR001304">
    <property type="entry name" value="C-type_lectin-like"/>
</dbReference>
<dbReference type="InterPro" id="IPR016186">
    <property type="entry name" value="C-type_lectin-like/link_sf"/>
</dbReference>
<dbReference type="InterPro" id="IPR050111">
    <property type="entry name" value="C-type_lectin/snaclec_domain"/>
</dbReference>
<dbReference type="InterPro" id="IPR018378">
    <property type="entry name" value="C-type_lectin_CS"/>
</dbReference>
<dbReference type="InterPro" id="IPR016187">
    <property type="entry name" value="CTDL_fold"/>
</dbReference>
<dbReference type="PANTHER" id="PTHR22803">
    <property type="entry name" value="MANNOSE, PHOSPHOLIPASE, LECTIN RECEPTOR RELATED"/>
    <property type="match status" value="1"/>
</dbReference>
<dbReference type="Pfam" id="PF00059">
    <property type="entry name" value="Lectin_C"/>
    <property type="match status" value="1"/>
</dbReference>
<dbReference type="PRINTS" id="PR01504">
    <property type="entry name" value="PNCREATITSAP"/>
</dbReference>
<dbReference type="SMART" id="SM00034">
    <property type="entry name" value="CLECT"/>
    <property type="match status" value="1"/>
</dbReference>
<dbReference type="SUPFAM" id="SSF56436">
    <property type="entry name" value="C-type lectin-like"/>
    <property type="match status" value="1"/>
</dbReference>
<dbReference type="PROSITE" id="PS00615">
    <property type="entry name" value="C_TYPE_LECTIN_1"/>
    <property type="match status" value="1"/>
</dbReference>
<dbReference type="PROSITE" id="PS50041">
    <property type="entry name" value="C_TYPE_LECTIN_2"/>
    <property type="match status" value="1"/>
</dbReference>
<keyword id="KW-1015">Disulfide bond</keyword>
<keyword id="KW-1199">Hemostasis impairing toxin</keyword>
<keyword id="KW-0430">Lectin</keyword>
<keyword id="KW-0964">Secreted</keyword>
<keyword id="KW-0732">Signal</keyword>
<keyword id="KW-0800">Toxin</keyword>
<reference evidence="6 7" key="1">
    <citation type="journal article" date="2006" name="FEBS Lett.">
        <title>Some aspects of the venom proteome of the Colubridae snake Philodryas olfersii revealed from a Duvernoy's (venom) gland transcriptome.</title>
        <authorList>
            <person name="Ching A.T.C."/>
            <person name="Rocha M.M.T."/>
            <person name="Paes Leme A.F."/>
            <person name="Pimenta D.C."/>
            <person name="Furtado M.F.D."/>
            <person name="Serrano S.M.T."/>
            <person name="Ho P.L."/>
            <person name="Junqueira-de-Azevedo I.L.M."/>
        </authorList>
    </citation>
    <scope>NUCLEOTIDE SEQUENCE [MRNA]</scope>
    <scope>SUBCELLULAR LOCATION</scope>
    <scope>TISSUE SPECIFICITY</scope>
    <source>
        <tissue evidence="5">Venom gland</tissue>
    </source>
</reference>
<reference key="2">
    <citation type="journal article" date="2006" name="FEBS Lett.">
        <authorList>
            <person name="Ching A.T.C."/>
            <person name="Rocha M.M.T."/>
            <person name="Paes Leme A.F."/>
            <person name="Pimenta D.C."/>
            <person name="Furtado M.F.D."/>
            <person name="Serrano S.M.T."/>
            <person name="Ho P.L."/>
            <person name="Junqueira-de-Azevedo I.L.M."/>
        </authorList>
    </citation>
    <scope>ERRATUM OF PUBMED:16857193</scope>
</reference>
<name>SLB_PHIOL</name>
<comment type="function">
    <text evidence="1">Interferes with one step of hemostasis (modulation of platelet aggregation, or coagulation cascade, for example).</text>
</comment>
<comment type="subunit">
    <text evidence="1">Heterodimer of subunits A and B; disulfide-linked.</text>
</comment>
<comment type="subcellular location">
    <subcellularLocation>
        <location evidence="5">Secreted</location>
    </subcellularLocation>
</comment>
<comment type="tissue specificity">
    <text evidence="5">Expressed by the venom gland.</text>
</comment>
<comment type="miscellaneous">
    <text evidence="2">Calcium is required for ligand binding.</text>
</comment>
<comment type="similarity">
    <text evidence="6">Belongs to the snaclec family.</text>
</comment>
<feature type="signal peptide" evidence="3">
    <location>
        <begin position="1"/>
        <end position="23"/>
    </location>
</feature>
<feature type="chain" id="PRO_0000315895" description="Snaclec subunit B">
    <location>
        <begin position="24"/>
        <end position="156"/>
    </location>
</feature>
<feature type="domain" description="C-type lectin" evidence="4">
    <location>
        <begin position="32"/>
        <end position="145"/>
    </location>
</feature>
<feature type="disulfide bond" evidence="2 4">
    <location>
        <begin position="25"/>
        <end position="36"/>
    </location>
</feature>
<feature type="disulfide bond" evidence="2 4">
    <location>
        <begin position="53"/>
        <end position="144"/>
    </location>
</feature>
<feature type="disulfide bond" description="Interchain (with C-102 in subunit A)" evidence="4">
    <location>
        <position position="98"/>
    </location>
</feature>
<feature type="disulfide bond" evidence="2 4">
    <location>
        <begin position="119"/>
        <end position="136"/>
    </location>
</feature>
<proteinExistence type="evidence at transcript level"/>
<evidence type="ECO:0000250" key="1"/>
<evidence type="ECO:0000250" key="2">
    <source>
        <dbReference type="UniProtKB" id="P23807"/>
    </source>
</evidence>
<evidence type="ECO:0000255" key="3"/>
<evidence type="ECO:0000255" key="4">
    <source>
        <dbReference type="PROSITE-ProRule" id="PRU00040"/>
    </source>
</evidence>
<evidence type="ECO:0000269" key="5">
    <source>
    </source>
</evidence>
<evidence type="ECO:0000305" key="6"/>
<evidence type="ECO:0000312" key="7">
    <source>
        <dbReference type="EMBL" id="ABI74695.1"/>
    </source>
</evidence>
<protein>
    <recommendedName>
        <fullName>Snaclec subunit B</fullName>
    </recommendedName>
    <alternativeName>
        <fullName>C-type lectin subunit B</fullName>
    </alternativeName>
</protein>
<sequence>MGRSIFVNLGLLVVAFSLRGSEADCPSGWSSYDKYCYKVFDERKNWDEAESFCMEQKTGSHLASILSSEEGSYVANLAFKRVKHPSMWIGLSNIWNQCSWQWSDGSSLGYEAWVEGPDCVMMRLQPGFIDWYSVECKSTLPFTCKFLAKREDPAPE</sequence>
<organism>
    <name type="scientific">Philodryas olfersii</name>
    <name type="common">Green snake</name>
    <dbReference type="NCBI Taxonomy" id="120305"/>
    <lineage>
        <taxon>Eukaryota</taxon>
        <taxon>Metazoa</taxon>
        <taxon>Chordata</taxon>
        <taxon>Craniata</taxon>
        <taxon>Vertebrata</taxon>
        <taxon>Euteleostomi</taxon>
        <taxon>Lepidosauria</taxon>
        <taxon>Squamata</taxon>
        <taxon>Bifurcata</taxon>
        <taxon>Unidentata</taxon>
        <taxon>Episquamata</taxon>
        <taxon>Toxicofera</taxon>
        <taxon>Serpentes</taxon>
        <taxon>Colubroidea</taxon>
        <taxon>Dipsadidae</taxon>
        <taxon>Philodryas</taxon>
    </lineage>
</organism>